<feature type="chain" id="PRO_0000066249" description="Uncharacterized 16.1 kDa protein in hypE 3'region">
    <location>
        <begin position="1"/>
        <end position="151"/>
    </location>
</feature>
<reference key="1">
    <citation type="journal article" date="1993" name="Mol. Microbiol.">
        <title>Organization of the genes necessary for hydrogenase expression in Rhodobacter capsulatus. Sequence analysis and identification of two hyp regulatory mutants.</title>
        <authorList>
            <person name="Colbeau A."/>
            <person name="Richaud P."/>
            <person name="Toussaint B."/>
            <person name="Caballero F.J."/>
            <person name="Elster C."/>
            <person name="Delphin C."/>
            <person name="Smith R.L."/>
            <person name="Chabert J."/>
            <person name="Vignais P.M."/>
        </authorList>
    </citation>
    <scope>NUCLEOTIDE SEQUENCE [GENOMIC DNA]</scope>
    <source>
        <strain>ATCC 33303 / B10</strain>
    </source>
</reference>
<sequence length="151" mass="16150">MSSSPGRIDADLAGGFGHDLVTLTELQFRQVEGALTAAGLDEAVLLGFNRLRLGVVEQAAALGQLIEEGARQQADLEAMHRLLRDAPVPILSIDATLGLHYSNEAARRFLGESFEQNGGAALRRSLTRPQIGRLSAALARAGDPAGRRRRI</sequence>
<dbReference type="EMBL" id="Z15088">
    <property type="protein sequence ID" value="CAA78797.1"/>
    <property type="molecule type" value="Genomic_DNA"/>
</dbReference>
<dbReference type="PIR" id="S32955">
    <property type="entry name" value="S32955"/>
</dbReference>
<proteinExistence type="predicted"/>
<organism>
    <name type="scientific">Rhodobacter capsulatus</name>
    <name type="common">Rhodopseudomonas capsulata</name>
    <dbReference type="NCBI Taxonomy" id="1061"/>
    <lineage>
        <taxon>Bacteria</taxon>
        <taxon>Pseudomonadati</taxon>
        <taxon>Pseudomonadota</taxon>
        <taxon>Alphaproteobacteria</taxon>
        <taxon>Rhodobacterales</taxon>
        <taxon>Rhodobacter group</taxon>
        <taxon>Rhodobacter</taxon>
    </lineage>
</organism>
<protein>
    <recommendedName>
        <fullName>Uncharacterized 16.1 kDa protein in hypE 3'region</fullName>
    </recommendedName>
    <alternativeName>
        <fullName>ORF20</fullName>
    </alternativeName>
</protein>
<name>YH20_RHOCA</name>
<accession>Q02999</accession>